<organism>
    <name type="scientific">Dictyostelium discoideum</name>
    <name type="common">Social amoeba</name>
    <dbReference type="NCBI Taxonomy" id="44689"/>
    <lineage>
        <taxon>Eukaryota</taxon>
        <taxon>Amoebozoa</taxon>
        <taxon>Evosea</taxon>
        <taxon>Eumycetozoa</taxon>
        <taxon>Dictyostelia</taxon>
        <taxon>Dictyosteliales</taxon>
        <taxon>Dictyosteliaceae</taxon>
        <taxon>Dictyostelium</taxon>
    </lineage>
</organism>
<dbReference type="EC" id="2.3.1.-"/>
<dbReference type="EMBL" id="AAFI02000172">
    <property type="protein sequence ID" value="EAL61987.1"/>
    <property type="molecule type" value="Genomic_DNA"/>
</dbReference>
<dbReference type="RefSeq" id="XP_635494.1">
    <property type="nucleotide sequence ID" value="XM_630402.1"/>
</dbReference>
<dbReference type="SMR" id="Q54FC8"/>
<dbReference type="FunCoup" id="Q54FC8">
    <property type="interactions" value="6"/>
</dbReference>
<dbReference type="STRING" id="44689.Q54FC8"/>
<dbReference type="PaxDb" id="44689-DDB0237714"/>
<dbReference type="EnsemblProtists" id="EAL61987">
    <property type="protein sequence ID" value="EAL61987"/>
    <property type="gene ID" value="DDB_G0290943"/>
</dbReference>
<dbReference type="GeneID" id="8627910"/>
<dbReference type="KEGG" id="ddi:DDB_G0290943"/>
<dbReference type="dictyBase" id="DDB_G0290943">
    <property type="gene designation" value="pks39"/>
</dbReference>
<dbReference type="VEuPathDB" id="AmoebaDB:DDB_G0290943"/>
<dbReference type="eggNOG" id="KOG1178">
    <property type="taxonomic scope" value="Eukaryota"/>
</dbReference>
<dbReference type="eggNOG" id="KOG1202">
    <property type="taxonomic scope" value="Eukaryota"/>
</dbReference>
<dbReference type="HOGENOM" id="CLU_000022_31_5_1"/>
<dbReference type="InParanoid" id="Q54FC8"/>
<dbReference type="OMA" id="LRPQWRN"/>
<dbReference type="PhylomeDB" id="Q54FC8"/>
<dbReference type="PRO" id="PR:Q54FC8"/>
<dbReference type="Proteomes" id="UP000002195">
    <property type="component" value="Chromosome 5"/>
</dbReference>
<dbReference type="GO" id="GO:0016020">
    <property type="term" value="C:membrane"/>
    <property type="evidence" value="ECO:0007669"/>
    <property type="project" value="UniProtKB-SubCell"/>
</dbReference>
<dbReference type="GO" id="GO:0004315">
    <property type="term" value="F:3-oxoacyl-[acyl-carrier-protein] synthase activity"/>
    <property type="evidence" value="ECO:0007669"/>
    <property type="project" value="InterPro"/>
</dbReference>
<dbReference type="GO" id="GO:0016491">
    <property type="term" value="F:oxidoreductase activity"/>
    <property type="evidence" value="ECO:0007669"/>
    <property type="project" value="InterPro"/>
</dbReference>
<dbReference type="GO" id="GO:0006633">
    <property type="term" value="P:fatty acid biosynthetic process"/>
    <property type="evidence" value="ECO:0000318"/>
    <property type="project" value="GO_Central"/>
</dbReference>
<dbReference type="CDD" id="cd02440">
    <property type="entry name" value="AdoMet_MTases"/>
    <property type="match status" value="1"/>
</dbReference>
<dbReference type="CDD" id="cd05195">
    <property type="entry name" value="enoyl_red"/>
    <property type="match status" value="1"/>
</dbReference>
<dbReference type="CDD" id="cd08954">
    <property type="entry name" value="KR_1_FAS_SDR_x"/>
    <property type="match status" value="1"/>
</dbReference>
<dbReference type="CDD" id="cd00833">
    <property type="entry name" value="PKS"/>
    <property type="match status" value="1"/>
</dbReference>
<dbReference type="CDD" id="cd05235">
    <property type="entry name" value="SDR_e1"/>
    <property type="match status" value="1"/>
</dbReference>
<dbReference type="FunFam" id="3.10.129.110:FF:000009">
    <property type="entry name" value="Probable polyketide synthase 2"/>
    <property type="match status" value="1"/>
</dbReference>
<dbReference type="FunFam" id="3.40.366.10:FF:000002">
    <property type="entry name" value="Probable polyketide synthase 2"/>
    <property type="match status" value="1"/>
</dbReference>
<dbReference type="FunFam" id="3.40.47.10:FF:000091">
    <property type="entry name" value="Probable polyketide synthase 32"/>
    <property type="match status" value="1"/>
</dbReference>
<dbReference type="FunFam" id="3.40.50.720:FF:000794">
    <property type="entry name" value="Probable polyketide synthase 33"/>
    <property type="match status" value="1"/>
</dbReference>
<dbReference type="Gene3D" id="3.40.47.10">
    <property type="match status" value="1"/>
</dbReference>
<dbReference type="Gene3D" id="1.10.1200.10">
    <property type="entry name" value="ACP-like"/>
    <property type="match status" value="1"/>
</dbReference>
<dbReference type="Gene3D" id="3.40.366.10">
    <property type="entry name" value="Malonyl-Coenzyme A Acyl Carrier Protein, domain 2"/>
    <property type="match status" value="1"/>
</dbReference>
<dbReference type="Gene3D" id="3.90.180.10">
    <property type="entry name" value="Medium-chain alcohol dehydrogenases, catalytic domain"/>
    <property type="match status" value="1"/>
</dbReference>
<dbReference type="Gene3D" id="3.40.50.720">
    <property type="entry name" value="NAD(P)-binding Rossmann-like Domain"/>
    <property type="match status" value="3"/>
</dbReference>
<dbReference type="Gene3D" id="3.10.129.110">
    <property type="entry name" value="Polyketide synthase dehydratase"/>
    <property type="match status" value="1"/>
</dbReference>
<dbReference type="Gene3D" id="3.40.50.150">
    <property type="entry name" value="Vaccinia Virus protein VP39"/>
    <property type="match status" value="1"/>
</dbReference>
<dbReference type="InterPro" id="IPR001227">
    <property type="entry name" value="Ac_transferase_dom_sf"/>
</dbReference>
<dbReference type="InterPro" id="IPR036736">
    <property type="entry name" value="ACP-like_sf"/>
</dbReference>
<dbReference type="InterPro" id="IPR014043">
    <property type="entry name" value="Acyl_transferase_dom"/>
</dbReference>
<dbReference type="InterPro" id="IPR016035">
    <property type="entry name" value="Acyl_Trfase/lysoPLipase"/>
</dbReference>
<dbReference type="InterPro" id="IPR013154">
    <property type="entry name" value="ADH-like_N"/>
</dbReference>
<dbReference type="InterPro" id="IPR013120">
    <property type="entry name" value="Far_NAD-bd"/>
</dbReference>
<dbReference type="InterPro" id="IPR011032">
    <property type="entry name" value="GroES-like_sf"/>
</dbReference>
<dbReference type="InterPro" id="IPR018201">
    <property type="entry name" value="Ketoacyl_synth_AS"/>
</dbReference>
<dbReference type="InterPro" id="IPR014031">
    <property type="entry name" value="Ketoacyl_synth_C"/>
</dbReference>
<dbReference type="InterPro" id="IPR014030">
    <property type="entry name" value="Ketoacyl_synth_N"/>
</dbReference>
<dbReference type="InterPro" id="IPR016036">
    <property type="entry name" value="Malonyl_transacylase_ACP-bd"/>
</dbReference>
<dbReference type="InterPro" id="IPR013217">
    <property type="entry name" value="Methyltransf_12"/>
</dbReference>
<dbReference type="InterPro" id="IPR036291">
    <property type="entry name" value="NAD(P)-bd_dom_sf"/>
</dbReference>
<dbReference type="InterPro" id="IPR020841">
    <property type="entry name" value="PKS_Beta-ketoAc_synthase_dom"/>
</dbReference>
<dbReference type="InterPro" id="IPR042104">
    <property type="entry name" value="PKS_dehydratase_sf"/>
</dbReference>
<dbReference type="InterPro" id="IPR020843">
    <property type="entry name" value="PKS_ER"/>
</dbReference>
<dbReference type="InterPro" id="IPR013968">
    <property type="entry name" value="PKS_KR"/>
</dbReference>
<dbReference type="InterPro" id="IPR049900">
    <property type="entry name" value="PKS_mFAS_DH"/>
</dbReference>
<dbReference type="InterPro" id="IPR050444">
    <property type="entry name" value="Polyketide_Synthase"/>
</dbReference>
<dbReference type="InterPro" id="IPR009081">
    <property type="entry name" value="PP-bd_ACP"/>
</dbReference>
<dbReference type="InterPro" id="IPR029063">
    <property type="entry name" value="SAM-dependent_MTases_sf"/>
</dbReference>
<dbReference type="InterPro" id="IPR010080">
    <property type="entry name" value="Thioester_reductase-like_dom"/>
</dbReference>
<dbReference type="InterPro" id="IPR016039">
    <property type="entry name" value="Thiolase-like"/>
</dbReference>
<dbReference type="PANTHER" id="PTHR45681:SF5">
    <property type="entry name" value="POLYKETIDE SYNTHASE 27-RELATED"/>
    <property type="match status" value="1"/>
</dbReference>
<dbReference type="PANTHER" id="PTHR45681">
    <property type="entry name" value="POLYKETIDE SYNTHASE 44-RELATED"/>
    <property type="match status" value="1"/>
</dbReference>
<dbReference type="Pfam" id="PF23297">
    <property type="entry name" value="ACP_SdgA_C"/>
    <property type="match status" value="1"/>
</dbReference>
<dbReference type="Pfam" id="PF00698">
    <property type="entry name" value="Acyl_transf_1"/>
    <property type="match status" value="1"/>
</dbReference>
<dbReference type="Pfam" id="PF08240">
    <property type="entry name" value="ADH_N"/>
    <property type="match status" value="1"/>
</dbReference>
<dbReference type="Pfam" id="PF13602">
    <property type="entry name" value="ADH_zinc_N_2"/>
    <property type="match status" value="1"/>
</dbReference>
<dbReference type="Pfam" id="PF00109">
    <property type="entry name" value="ketoacyl-synt"/>
    <property type="match status" value="1"/>
</dbReference>
<dbReference type="Pfam" id="PF02801">
    <property type="entry name" value="Ketoacyl-synt_C"/>
    <property type="match status" value="1"/>
</dbReference>
<dbReference type="Pfam" id="PF08659">
    <property type="entry name" value="KR"/>
    <property type="match status" value="1"/>
</dbReference>
<dbReference type="Pfam" id="PF08242">
    <property type="entry name" value="Methyltransf_12"/>
    <property type="match status" value="1"/>
</dbReference>
<dbReference type="Pfam" id="PF07993">
    <property type="entry name" value="NAD_binding_4"/>
    <property type="match status" value="1"/>
</dbReference>
<dbReference type="SMART" id="SM00827">
    <property type="entry name" value="PKS_AT"/>
    <property type="match status" value="1"/>
</dbReference>
<dbReference type="SMART" id="SM00829">
    <property type="entry name" value="PKS_ER"/>
    <property type="match status" value="1"/>
</dbReference>
<dbReference type="SMART" id="SM00822">
    <property type="entry name" value="PKS_KR"/>
    <property type="match status" value="1"/>
</dbReference>
<dbReference type="SMART" id="SM00825">
    <property type="entry name" value="PKS_KS"/>
    <property type="match status" value="1"/>
</dbReference>
<dbReference type="SUPFAM" id="SSF47336">
    <property type="entry name" value="ACP-like"/>
    <property type="match status" value="1"/>
</dbReference>
<dbReference type="SUPFAM" id="SSF52151">
    <property type="entry name" value="FabD/lysophospholipase-like"/>
    <property type="match status" value="1"/>
</dbReference>
<dbReference type="SUPFAM" id="SSF50129">
    <property type="entry name" value="GroES-like"/>
    <property type="match status" value="1"/>
</dbReference>
<dbReference type="SUPFAM" id="SSF51735">
    <property type="entry name" value="NAD(P)-binding Rossmann-fold domains"/>
    <property type="match status" value="3"/>
</dbReference>
<dbReference type="SUPFAM" id="SSF55048">
    <property type="entry name" value="Probable ACP-binding domain of malonyl-CoA ACP transacylase"/>
    <property type="match status" value="1"/>
</dbReference>
<dbReference type="SUPFAM" id="SSF53335">
    <property type="entry name" value="S-adenosyl-L-methionine-dependent methyltransferases"/>
    <property type="match status" value="1"/>
</dbReference>
<dbReference type="SUPFAM" id="SSF53901">
    <property type="entry name" value="Thiolase-like"/>
    <property type="match status" value="1"/>
</dbReference>
<dbReference type="PROSITE" id="PS50075">
    <property type="entry name" value="CARRIER"/>
    <property type="match status" value="1"/>
</dbReference>
<dbReference type="PROSITE" id="PS00606">
    <property type="entry name" value="KS3_1"/>
    <property type="match status" value="1"/>
</dbReference>
<dbReference type="PROSITE" id="PS52004">
    <property type="entry name" value="KS3_2"/>
    <property type="match status" value="1"/>
</dbReference>
<dbReference type="PROSITE" id="PS52019">
    <property type="entry name" value="PKS_MFAS_DH"/>
    <property type="match status" value="1"/>
</dbReference>
<name>PKS39_DICDI</name>
<sequence length="3108" mass="353866">MTENIDKNDDDVAVIGIGLRFPSGNLKESISKPNQLFNELLNGLDGIVTTSERWSDNYYLNGEVVSKFAGLLPLDEWKQFDPIFFAINPSYDNVSSIDPQQRLLLKCVWEALEDSGIDPISLRGTNTSTFIGSSTIDYNDLQKSPFETQNNIFGSTTHSIANRIGFSFDFRGENLTIDTACSSSSNAINCGYNSIKSNKSNVSIVGGVNFILNPYISKSFTQLDMLSPTGKCHTFSSDADGFVRSEGVGIVVLKKLKDAIKDSNNIYCVIKGSSSNIDGNFDKLNFYSPSKLSQCENIKLAIKSTNGQINESDIDYCETHGTGTPTGDPIELEGISRAFNNKASTTNNNKQVLVGSFKSNIGHTEACSGVASLIKCCLMFKNKLFLQNINFKEPNPLINFKEWGLKVVTEPIKFNENKPTVMLINNFGITGSNVCLILSEFSGNSKSNDYQKMEIDNKFNEKKKYLIPLSSNSSTSLNNYKLSIIKHLNSRSSSSSTTTSFEEFVYNQIKFKSTSLIQKSVIIASDWNEFQDENNQIKLENSDNLISNITVEKKKSPIIVMVLCGQGSQYNKMALSLYDNEPIFREYVNRFDKELFKYYGYSVLDKLRSIEDKDLISIHQPILAQPATVIIQVSLYELYKHWGVSADIIIGHSLGEISSAYCSGMIDFQTLCYLTYHRSVAQNRTTGTGKMLSVNISSDEFINSYQSTTKYESLEIACYNSPTSIVIAGKEDLLNEIIKDFKSNDIFCAMLGSLSSFHTSSQQMIKDEVCSLNISSKQPSIAIFSTVTTNLFNHQSSPFDADYVFDNIRQPVRFTQTITNLYKYAESNDMGNEITFIEVSPHPTLQFYLNQMNSTQSSYFNSGKNITIYSPLNKKKNDYNEFLKTISLLYVNNNLNINFKSQLINNNNNNNNNNYTNLFNNLPLYQWDDKEYFKITSFHEKIKSEGPSIHSLGNNTDSPYPSYQTFIDIKKSPFQWLKGHQVSDKFYYPGMGHVHNLLSIYPNQDITISSLEFKSPLVLAEGNRQCLQTSVTPLSKNEFNIKSHYKDQKTNQWILTSLGNFSLFKHNIIENNQPINIQTLKDKCNFTSISKQDLYETIRIKTNLTYKGLFQGVKQCHIGNNCSLAIVSLNEIYIQKEYNHLINNSNMNTLFNTAILDTCLHGVLCAVTQPVVLDRIEGFNFYSSNIPSSLNYRNNNNNNNNINNNNNNNNNSNNTINEFYVYSEIRARTNFQTYSGSIKIILPNGTLLVDIGNVVCTIAASNPDSSLICKPNYIYTPHLQSKDSIINKPEQFKHLHRVNEFSFKNEENLFISNRLLLSLFYKHINNRCPSINLESLETLEYDQFKQLYYNSLVNENLFKFIFEILKKYQNIPNINNNNNNNNNNNNNNNNNNNNNNNNNNNNNNNNNNNNNNNNNNNNNNNNNNNNNNNNNNNNNEKLYIKTTKIMAKQLFPLKDDDSITDTPQSLFESGYLDVFYKNSIVVQPLNSLLSEIIVETLKPILNEPIVFRILEAGGGTGSLSLLILEKICKLLNENNSTTSIIDIEFTWSDISASFFAEIKEKFSSFTNHNSLNIIYRVLDLDKPLLDQDLKASYYDFVVMSNVMHVVKKLKPTLNEIHNILAPNGQLLFVEPPYKSFFIDSIFGCFSQWWPSSDSDIELRPDRCCMKQEKWINLLNQCNYRDTIMSGNDNLLFLVQTRKPTINEIISEQSISLDQLKSFNNIILFSSNNKNNKNDSFSIIQNLITLNQELKHKIININNYNEFQSWITNNQNIDNKTLIIFLKSIDSTVNTSNFKETTFEYIQINQLILKLELSNNFKHLLLSLNSTTDNYLTSSIVGAARYFIEFPQLDLLTLNYDNVSIENNQQLLSLINYLINSNNNIQKEFTINNNIVYYERFCKRLNNIKSKFQSKSFETNKDNLYIQLNSNLEYQLYSKKDELNSNEVEIEIKATGINYKDYLLHIGMIGTNLEIKYGKEIENGIGFDNPKIGNDFSGIITRLGCNVKEFKVGDQVCGFGSKTNSSHIIVDSDSIYYKPLYYSHSVSASIPSIYITSLHSIYGIGNLKSNESILIHSAAGGVGLSSLDLLKSKQHQGYIFLTVGSKDKEEYLINKYGSLITAIYSSRNKNYVYEIKNKLIELGEVEQHQQGVDLILNTLSSEFMSPNFQCLNLSGRIVDLSITHLTPNDYMTNSHYKFNMGYNNVNVEDFPGKLIKSYLKKIIEMINSNELELSVPIIEYSNNQFKDAIEYINQRKHIGKIIVNHSQDEFNRVYNNYQNNNNQIIMKHSYDISKLNIGKNIILTGQTGIVLEILKYLVKYSNHSIENIIILSKSKLKWELELLINQTKFKKDNIIKFHFNQIDIEDSNKVNQALNQLELNENITNIDSIIHFAFMNDIGDVQQVDMNRLNNAHGAKTIGAINLHNQSINRSWNIKQFIMASSVASIVGSEQQCCYVSACNVIDSLSKYRHSIGLPSLAINLGTISSTGFITRNNTIETMLKSSILNFLSPQLVISSLDLFIQNQHQYPNYCMSDFKFKIIPSTNQYFSKFDFEINIVKKSNQIKSFFGGDGNNEIIHSTILNKISELLSIDKSKINEDLQLTQYGTDSLVIVQLKNFIDNQLGHNIITIQQLQNNKINQSIEIIKSALNKNNNIYNNKKNNNNNLVKKEQQSLDEFIKNETKLNESIISRPYSIKKILNNNNNSKSIFLTGSTGFLGAYLLMELIKMNNISKIYCLIRNNSKLTNPIDVIINNLKKHQLIDMNKESPKRKTKIINHTGNISNDKLNSSDNSNNNNNQINEDQLIKIIPMIGDISKDKFGLTEQDYLKLSNECDIIINSAADLNLKSNYEESKTINVNNVNQVIKLSVSNNSSQKLIVHFSSLAVFINHPFKDEEDFEETNIVPNFNSTPIGYIQSKVISEKLLTNAAESRGIPSIIIRPPDIFSNPITGIGHSNDFLSLLIKASKDIGYYPNIHKSIFSTPVTTIAKTTIDLIFNENSWNQNKSKPISIYNFNGNSMEFKSFYRVLENNFKCKEIDFDEWIELVSKSNGKSSKRYSTFHIHKNQNLLLTTFTINSLFKMSNSTKELLISIGSYNHQDWEINESMILNDIINNH</sequence>
<protein>
    <recommendedName>
        <fullName>Probable polyketide synthase 39</fullName>
        <shortName>dipks39</shortName>
        <ecNumber>2.3.1.-</ecNumber>
    </recommendedName>
</protein>
<reference key="1">
    <citation type="journal article" date="2005" name="Nature">
        <title>The genome of the social amoeba Dictyostelium discoideum.</title>
        <authorList>
            <person name="Eichinger L."/>
            <person name="Pachebat J.A."/>
            <person name="Gloeckner G."/>
            <person name="Rajandream M.A."/>
            <person name="Sucgang R."/>
            <person name="Berriman M."/>
            <person name="Song J."/>
            <person name="Olsen R."/>
            <person name="Szafranski K."/>
            <person name="Xu Q."/>
            <person name="Tunggal B."/>
            <person name="Kummerfeld S."/>
            <person name="Madera M."/>
            <person name="Konfortov B.A."/>
            <person name="Rivero F."/>
            <person name="Bankier A.T."/>
            <person name="Lehmann R."/>
            <person name="Hamlin N."/>
            <person name="Davies R."/>
            <person name="Gaudet P."/>
            <person name="Fey P."/>
            <person name="Pilcher K."/>
            <person name="Chen G."/>
            <person name="Saunders D."/>
            <person name="Sodergren E.J."/>
            <person name="Davis P."/>
            <person name="Kerhornou A."/>
            <person name="Nie X."/>
            <person name="Hall N."/>
            <person name="Anjard C."/>
            <person name="Hemphill L."/>
            <person name="Bason N."/>
            <person name="Farbrother P."/>
            <person name="Desany B."/>
            <person name="Just E."/>
            <person name="Morio T."/>
            <person name="Rost R."/>
            <person name="Churcher C.M."/>
            <person name="Cooper J."/>
            <person name="Haydock S."/>
            <person name="van Driessche N."/>
            <person name="Cronin A."/>
            <person name="Goodhead I."/>
            <person name="Muzny D.M."/>
            <person name="Mourier T."/>
            <person name="Pain A."/>
            <person name="Lu M."/>
            <person name="Harper D."/>
            <person name="Lindsay R."/>
            <person name="Hauser H."/>
            <person name="James K.D."/>
            <person name="Quiles M."/>
            <person name="Madan Babu M."/>
            <person name="Saito T."/>
            <person name="Buchrieser C."/>
            <person name="Wardroper A."/>
            <person name="Felder M."/>
            <person name="Thangavelu M."/>
            <person name="Johnson D."/>
            <person name="Knights A."/>
            <person name="Loulseged H."/>
            <person name="Mungall K.L."/>
            <person name="Oliver K."/>
            <person name="Price C."/>
            <person name="Quail M.A."/>
            <person name="Urushihara H."/>
            <person name="Hernandez J."/>
            <person name="Rabbinowitsch E."/>
            <person name="Steffen D."/>
            <person name="Sanders M."/>
            <person name="Ma J."/>
            <person name="Kohara Y."/>
            <person name="Sharp S."/>
            <person name="Simmonds M.N."/>
            <person name="Spiegler S."/>
            <person name="Tivey A."/>
            <person name="Sugano S."/>
            <person name="White B."/>
            <person name="Walker D."/>
            <person name="Woodward J.R."/>
            <person name="Winckler T."/>
            <person name="Tanaka Y."/>
            <person name="Shaulsky G."/>
            <person name="Schleicher M."/>
            <person name="Weinstock G.M."/>
            <person name="Rosenthal A."/>
            <person name="Cox E.C."/>
            <person name="Chisholm R.L."/>
            <person name="Gibbs R.A."/>
            <person name="Loomis W.F."/>
            <person name="Platzer M."/>
            <person name="Kay R.R."/>
            <person name="Williams J.G."/>
            <person name="Dear P.H."/>
            <person name="Noegel A.A."/>
            <person name="Barrell B.G."/>
            <person name="Kuspa A."/>
        </authorList>
    </citation>
    <scope>NUCLEOTIDE SEQUENCE [LARGE SCALE GENOMIC DNA]</scope>
    <source>
        <strain>AX4</strain>
    </source>
</reference>
<reference key="2">
    <citation type="journal article" date="2007" name="Bioinformatics">
        <title>Polyketide synthase genes and the natural products potential of Dictyostelium discoideum.</title>
        <authorList>
            <person name="Zucko J."/>
            <person name="Skunca N."/>
            <person name="Curk T."/>
            <person name="Zupan B."/>
            <person name="Long P.F."/>
            <person name="Cullum J."/>
            <person name="Kessin R.H."/>
            <person name="Hranueli D."/>
        </authorList>
    </citation>
    <scope>IDENTIFICATION</scope>
</reference>
<proteinExistence type="inferred from homology"/>
<gene>
    <name type="primary">pks39</name>
    <name type="ORF">DDB_G0290943</name>
</gene>
<evidence type="ECO:0000250" key="1"/>
<evidence type="ECO:0000255" key="2"/>
<evidence type="ECO:0000255" key="3">
    <source>
        <dbReference type="PROSITE-ProRule" id="PRU00258"/>
    </source>
</evidence>
<evidence type="ECO:0000255" key="4">
    <source>
        <dbReference type="PROSITE-ProRule" id="PRU01348"/>
    </source>
</evidence>
<evidence type="ECO:0000255" key="5">
    <source>
        <dbReference type="PROSITE-ProRule" id="PRU01363"/>
    </source>
</evidence>
<evidence type="ECO:0000255" key="6">
    <source>
        <dbReference type="PROSITE-ProRule" id="PRU10022"/>
    </source>
</evidence>
<evidence type="ECO:0000256" key="7">
    <source>
        <dbReference type="SAM" id="MobiDB-lite"/>
    </source>
</evidence>
<evidence type="ECO:0000305" key="8"/>
<feature type="chain" id="PRO_0000371396" description="Probable polyketide synthase 39">
    <location>
        <begin position="1"/>
        <end position="3108"/>
    </location>
</feature>
<feature type="transmembrane region" description="Helical" evidence="2">
    <location>
        <begin position="2702"/>
        <end position="2722"/>
    </location>
</feature>
<feature type="domain" description="Ketosynthase family 3 (KS3)" evidence="4">
    <location>
        <begin position="9"/>
        <end position="440"/>
    </location>
</feature>
<feature type="domain" description="PKS/mFAS DH" evidence="5">
    <location>
        <begin position="939"/>
        <end position="1265"/>
    </location>
</feature>
<feature type="domain" description="Carrier" evidence="3">
    <location>
        <begin position="2566"/>
        <end position="2643"/>
    </location>
</feature>
<feature type="region of interest" description="Acyl/malonyl transferase">
    <location>
        <begin position="643"/>
        <end position="676"/>
    </location>
</feature>
<feature type="region of interest" description="N-terminal hotdog fold" evidence="5">
    <location>
        <begin position="939"/>
        <end position="1068"/>
    </location>
</feature>
<feature type="region of interest" description="C-terminal hotdog fold" evidence="5">
    <location>
        <begin position="1085"/>
        <end position="1265"/>
    </location>
</feature>
<feature type="region of interest" description="Disordered" evidence="7">
    <location>
        <begin position="1375"/>
        <end position="1435"/>
    </location>
</feature>
<feature type="active site" description="For beta-ketoacyl synthase activity" evidence="4">
    <location>
        <position position="181"/>
    </location>
</feature>
<feature type="active site" description="For beta-ketoacyl synthase activity" evidence="4">
    <location>
        <position position="320"/>
    </location>
</feature>
<feature type="active site" description="For beta-ketoacyl synthase activity" evidence="4">
    <location>
        <position position="363"/>
    </location>
</feature>
<feature type="active site" description="For acyl/malonyl transferase activity" evidence="6">
    <location>
        <position position="653"/>
    </location>
</feature>
<feature type="active site" description="Proton acceptor; for dehydratase activity" evidence="5">
    <location>
        <position position="980"/>
    </location>
</feature>
<feature type="active site" description="Proton donor; for dehydratase activity" evidence="5">
    <location>
        <position position="1157"/>
    </location>
</feature>
<feature type="modified residue" description="O-(pantetheine 4'-phosphoryl)serine" evidence="3">
    <location>
        <position position="2603"/>
    </location>
</feature>
<keyword id="KW-0472">Membrane</keyword>
<keyword id="KW-0596">Phosphopantetheine</keyword>
<keyword id="KW-0597">Phosphoprotein</keyword>
<keyword id="KW-1185">Reference proteome</keyword>
<keyword id="KW-0808">Transferase</keyword>
<keyword id="KW-0812">Transmembrane</keyword>
<keyword id="KW-1133">Transmembrane helix</keyword>
<comment type="function">
    <text evidence="1">Probable polyketide synthase.</text>
</comment>
<comment type="cofactor">
    <cofactor evidence="1">
        <name>pantetheine 4'-phosphate</name>
        <dbReference type="ChEBI" id="CHEBI:47942"/>
    </cofactor>
    <text evidence="1">Binds 1 phosphopantetheine covalently.</text>
</comment>
<comment type="subcellular location">
    <subcellularLocation>
        <location evidence="8">Membrane</location>
        <topology evidence="8">Single-pass membrane protein</topology>
    </subcellularLocation>
</comment>
<comment type="domain">
    <text evidence="1">Modular protein that is responsible for the completion of one condensation-processing cycle. The beta-ketoacyl synthase region is responsible for the actual condensation reaction while the acyl/malonyl transferase region is responsible for incorporating carboxylic acids units onto an acyl carrier protein (ACP) domain (By similarity).</text>
</comment>
<comment type="miscellaneous">
    <text>Encoded by one of the numerous copies of polyketide synthase genes and clustered as a pair pks38/pks39 in chromosome 5.</text>
</comment>
<accession>Q54FC8</accession>